<feature type="chain" id="PRO_0000376833" description="Probable glutamine ABC transporter permease protein GlnM">
    <location>
        <begin position="1"/>
        <end position="216"/>
    </location>
</feature>
<feature type="transmembrane region" description="Helical" evidence="2">
    <location>
        <begin position="21"/>
        <end position="41"/>
    </location>
</feature>
<feature type="transmembrane region" description="Helical" evidence="2">
    <location>
        <begin position="63"/>
        <end position="83"/>
    </location>
</feature>
<feature type="transmembrane region" description="Helical" evidence="2">
    <location>
        <begin position="85"/>
        <end position="105"/>
    </location>
</feature>
<feature type="transmembrane region" description="Helical" evidence="2">
    <location>
        <begin position="132"/>
        <end position="152"/>
    </location>
</feature>
<feature type="transmembrane region" description="Helical" evidence="2">
    <location>
        <begin position="181"/>
        <end position="201"/>
    </location>
</feature>
<feature type="domain" description="ABC transmembrane type-1" evidence="2">
    <location>
        <begin position="17"/>
        <end position="205"/>
    </location>
</feature>
<protein>
    <recommendedName>
        <fullName>Probable glutamine ABC transporter permease protein GlnM</fullName>
    </recommendedName>
</protein>
<comment type="function">
    <text evidence="1">Part of the ABC transporter complex GlnHMPQ involved in glutamine transport. Probably responsible for the translocation of the substrate across the membrane (By similarity).</text>
</comment>
<comment type="subunit">
    <text evidence="4">The complex is composed of two ATP-binding proteins (GlnQ), two transmembrane proteins (GlnM and GlnP) and a solute-binding protein (GlnH).</text>
</comment>
<comment type="subcellular location">
    <subcellularLocation>
        <location evidence="1">Cell membrane</location>
        <topology evidence="2">Multi-pass membrane protein</topology>
    </subcellularLocation>
</comment>
<comment type="induction">
    <text evidence="3">Positively regulated by TnrA under nitrogen-limited conditions.</text>
</comment>
<comment type="similarity">
    <text evidence="4">Belongs to the binding-protein-dependent transport system permease family.</text>
</comment>
<accession>O34671</accession>
<accession>Q798R0</accession>
<sequence>MNVSILFDNFSMYMDGFYHTLLASVIALAGSFVLGVAVAVMRITVFKPLQWLGTAYVEFIRNIPLLLITFVFYFGLPNAGLRLDGFQAGTVALTIYTSAFIAEAIRAGIQSVSKGQMEAARSSGFTYSQAMLHIILPQAIKIVIPPLGNQFLNLVKNSSILGVVAGLDLMYQADLVSSSTLVVFDVYIFVALFYLVLTIPLSIGVNYLEKRLEKSY</sequence>
<keyword id="KW-0029">Amino-acid transport</keyword>
<keyword id="KW-1003">Cell membrane</keyword>
<keyword id="KW-0472">Membrane</keyword>
<keyword id="KW-1185">Reference proteome</keyword>
<keyword id="KW-0812">Transmembrane</keyword>
<keyword id="KW-1133">Transmembrane helix</keyword>
<keyword id="KW-0813">Transport</keyword>
<evidence type="ECO:0000250" key="1"/>
<evidence type="ECO:0000255" key="2">
    <source>
        <dbReference type="PROSITE-ProRule" id="PRU00441"/>
    </source>
</evidence>
<evidence type="ECO:0000269" key="3">
    <source>
    </source>
</evidence>
<evidence type="ECO:0000305" key="4"/>
<name>GLNM_BACSU</name>
<proteinExistence type="evidence at transcript level"/>
<reference key="1">
    <citation type="journal article" date="1995" name="Microbiology">
        <title>An operon encoding a novel ABC-type transport system in Bacillus subtilis.</title>
        <authorList>
            <person name="Rodriguez F."/>
            <person name="Grandi G."/>
        </authorList>
    </citation>
    <scope>NUCLEOTIDE SEQUENCE [GENOMIC DNA]</scope>
    <source>
        <strain>168</strain>
    </source>
</reference>
<reference key="2">
    <citation type="journal article" date="1997" name="Nature">
        <title>The complete genome sequence of the Gram-positive bacterium Bacillus subtilis.</title>
        <authorList>
            <person name="Kunst F."/>
            <person name="Ogasawara N."/>
            <person name="Moszer I."/>
            <person name="Albertini A.M."/>
            <person name="Alloni G."/>
            <person name="Azevedo V."/>
            <person name="Bertero M.G."/>
            <person name="Bessieres P."/>
            <person name="Bolotin A."/>
            <person name="Borchert S."/>
            <person name="Borriss R."/>
            <person name="Boursier L."/>
            <person name="Brans A."/>
            <person name="Braun M."/>
            <person name="Brignell S.C."/>
            <person name="Bron S."/>
            <person name="Brouillet S."/>
            <person name="Bruschi C.V."/>
            <person name="Caldwell B."/>
            <person name="Capuano V."/>
            <person name="Carter N.M."/>
            <person name="Choi S.-K."/>
            <person name="Codani J.-J."/>
            <person name="Connerton I.F."/>
            <person name="Cummings N.J."/>
            <person name="Daniel R.A."/>
            <person name="Denizot F."/>
            <person name="Devine K.M."/>
            <person name="Duesterhoeft A."/>
            <person name="Ehrlich S.D."/>
            <person name="Emmerson P.T."/>
            <person name="Entian K.-D."/>
            <person name="Errington J."/>
            <person name="Fabret C."/>
            <person name="Ferrari E."/>
            <person name="Foulger D."/>
            <person name="Fritz C."/>
            <person name="Fujita M."/>
            <person name="Fujita Y."/>
            <person name="Fuma S."/>
            <person name="Galizzi A."/>
            <person name="Galleron N."/>
            <person name="Ghim S.-Y."/>
            <person name="Glaser P."/>
            <person name="Goffeau A."/>
            <person name="Golightly E.J."/>
            <person name="Grandi G."/>
            <person name="Guiseppi G."/>
            <person name="Guy B.J."/>
            <person name="Haga K."/>
            <person name="Haiech J."/>
            <person name="Harwood C.R."/>
            <person name="Henaut A."/>
            <person name="Hilbert H."/>
            <person name="Holsappel S."/>
            <person name="Hosono S."/>
            <person name="Hullo M.-F."/>
            <person name="Itaya M."/>
            <person name="Jones L.-M."/>
            <person name="Joris B."/>
            <person name="Karamata D."/>
            <person name="Kasahara Y."/>
            <person name="Klaerr-Blanchard M."/>
            <person name="Klein C."/>
            <person name="Kobayashi Y."/>
            <person name="Koetter P."/>
            <person name="Koningstein G."/>
            <person name="Krogh S."/>
            <person name="Kumano M."/>
            <person name="Kurita K."/>
            <person name="Lapidus A."/>
            <person name="Lardinois S."/>
            <person name="Lauber J."/>
            <person name="Lazarevic V."/>
            <person name="Lee S.-M."/>
            <person name="Levine A."/>
            <person name="Liu H."/>
            <person name="Masuda S."/>
            <person name="Mauel C."/>
            <person name="Medigue C."/>
            <person name="Medina N."/>
            <person name="Mellado R.P."/>
            <person name="Mizuno M."/>
            <person name="Moestl D."/>
            <person name="Nakai S."/>
            <person name="Noback M."/>
            <person name="Noone D."/>
            <person name="O'Reilly M."/>
            <person name="Ogawa K."/>
            <person name="Ogiwara A."/>
            <person name="Oudega B."/>
            <person name="Park S.-H."/>
            <person name="Parro V."/>
            <person name="Pohl T.M."/>
            <person name="Portetelle D."/>
            <person name="Porwollik S."/>
            <person name="Prescott A.M."/>
            <person name="Presecan E."/>
            <person name="Pujic P."/>
            <person name="Purnelle B."/>
            <person name="Rapoport G."/>
            <person name="Rey M."/>
            <person name="Reynolds S."/>
            <person name="Rieger M."/>
            <person name="Rivolta C."/>
            <person name="Rocha E."/>
            <person name="Roche B."/>
            <person name="Rose M."/>
            <person name="Sadaie Y."/>
            <person name="Sato T."/>
            <person name="Scanlan E."/>
            <person name="Schleich S."/>
            <person name="Schroeter R."/>
            <person name="Scoffone F."/>
            <person name="Sekiguchi J."/>
            <person name="Sekowska A."/>
            <person name="Seror S.J."/>
            <person name="Serror P."/>
            <person name="Shin B.-S."/>
            <person name="Soldo B."/>
            <person name="Sorokin A."/>
            <person name="Tacconi E."/>
            <person name="Takagi T."/>
            <person name="Takahashi H."/>
            <person name="Takemaru K."/>
            <person name="Takeuchi M."/>
            <person name="Tamakoshi A."/>
            <person name="Tanaka T."/>
            <person name="Terpstra P."/>
            <person name="Tognoni A."/>
            <person name="Tosato V."/>
            <person name="Uchiyama S."/>
            <person name="Vandenbol M."/>
            <person name="Vannier F."/>
            <person name="Vassarotti A."/>
            <person name="Viari A."/>
            <person name="Wambutt R."/>
            <person name="Wedler E."/>
            <person name="Wedler H."/>
            <person name="Weitzenegger T."/>
            <person name="Winters P."/>
            <person name="Wipat A."/>
            <person name="Yamamoto H."/>
            <person name="Yamane K."/>
            <person name="Yasumoto K."/>
            <person name="Yata K."/>
            <person name="Yoshida K."/>
            <person name="Yoshikawa H.-F."/>
            <person name="Zumstein E."/>
            <person name="Yoshikawa H."/>
            <person name="Danchin A."/>
        </authorList>
    </citation>
    <scope>NUCLEOTIDE SEQUENCE [LARGE SCALE GENOMIC DNA]</scope>
    <source>
        <strain>168</strain>
    </source>
</reference>
<reference key="3">
    <citation type="journal article" date="2003" name="Mol. Microbiol.">
        <title>Identification of additional TnrA-regulated genes of Bacillus subtilis associated with a TnrA box.</title>
        <authorList>
            <person name="Yoshida K."/>
            <person name="Yamaguchi H."/>
            <person name="Kinehara M."/>
            <person name="Ohki Y.-H."/>
            <person name="Nakaura Y."/>
            <person name="Fujita Y."/>
        </authorList>
    </citation>
    <scope>INDUCTION BY TNRA</scope>
</reference>
<organism>
    <name type="scientific">Bacillus subtilis (strain 168)</name>
    <dbReference type="NCBI Taxonomy" id="224308"/>
    <lineage>
        <taxon>Bacteria</taxon>
        <taxon>Bacillati</taxon>
        <taxon>Bacillota</taxon>
        <taxon>Bacilli</taxon>
        <taxon>Bacillales</taxon>
        <taxon>Bacillaceae</taxon>
        <taxon>Bacillus</taxon>
    </lineage>
</organism>
<dbReference type="EMBL" id="Z69371">
    <property type="protein sequence ID" value="CAA93319.1"/>
    <property type="molecule type" value="Genomic_DNA"/>
</dbReference>
<dbReference type="EMBL" id="AL009126">
    <property type="protein sequence ID" value="CAB14686.1"/>
    <property type="molecule type" value="Genomic_DNA"/>
</dbReference>
<dbReference type="PIR" id="E69633">
    <property type="entry name" value="E69633"/>
</dbReference>
<dbReference type="RefSeq" id="NP_390622.1">
    <property type="nucleotide sequence ID" value="NC_000964.3"/>
</dbReference>
<dbReference type="RefSeq" id="WP_004398664.1">
    <property type="nucleotide sequence ID" value="NZ_OZ025638.1"/>
</dbReference>
<dbReference type="SMR" id="O34671"/>
<dbReference type="FunCoup" id="O34671">
    <property type="interactions" value="127"/>
</dbReference>
<dbReference type="STRING" id="224308.BSU27450"/>
<dbReference type="PaxDb" id="224308-BSU27450"/>
<dbReference type="EnsemblBacteria" id="CAB14686">
    <property type="protein sequence ID" value="CAB14686"/>
    <property type="gene ID" value="BSU_27450"/>
</dbReference>
<dbReference type="GeneID" id="935975"/>
<dbReference type="KEGG" id="bsu:BSU27450"/>
<dbReference type="PATRIC" id="fig|224308.179.peg.2981"/>
<dbReference type="eggNOG" id="COG0765">
    <property type="taxonomic scope" value="Bacteria"/>
</dbReference>
<dbReference type="InParanoid" id="O34671"/>
<dbReference type="OrthoDB" id="9805999at2"/>
<dbReference type="PhylomeDB" id="O34671"/>
<dbReference type="BioCyc" id="BSUB:BSU27450-MONOMER"/>
<dbReference type="Proteomes" id="UP000001570">
    <property type="component" value="Chromosome"/>
</dbReference>
<dbReference type="GO" id="GO:0043190">
    <property type="term" value="C:ATP-binding cassette (ABC) transporter complex"/>
    <property type="evidence" value="ECO:0007669"/>
    <property type="project" value="InterPro"/>
</dbReference>
<dbReference type="GO" id="GO:0005886">
    <property type="term" value="C:plasma membrane"/>
    <property type="evidence" value="ECO:0000318"/>
    <property type="project" value="GO_Central"/>
</dbReference>
<dbReference type="GO" id="GO:0022857">
    <property type="term" value="F:transmembrane transporter activity"/>
    <property type="evidence" value="ECO:0007669"/>
    <property type="project" value="InterPro"/>
</dbReference>
<dbReference type="GO" id="GO:0006865">
    <property type="term" value="P:amino acid transport"/>
    <property type="evidence" value="ECO:0000318"/>
    <property type="project" value="GO_Central"/>
</dbReference>
<dbReference type="CDD" id="cd06261">
    <property type="entry name" value="TM_PBP2"/>
    <property type="match status" value="1"/>
</dbReference>
<dbReference type="FunFam" id="1.10.3720.10:FF:000033">
    <property type="entry name" value="Polar amino acid ABC transporter permease"/>
    <property type="match status" value="1"/>
</dbReference>
<dbReference type="Gene3D" id="1.10.3720.10">
    <property type="entry name" value="MetI-like"/>
    <property type="match status" value="1"/>
</dbReference>
<dbReference type="InterPro" id="IPR010065">
    <property type="entry name" value="AA_ABC_transptr_permease_3TM"/>
</dbReference>
<dbReference type="InterPro" id="IPR043429">
    <property type="entry name" value="ArtM/GltK/GlnP/TcyL/YhdX-like"/>
</dbReference>
<dbReference type="InterPro" id="IPR000515">
    <property type="entry name" value="MetI-like"/>
</dbReference>
<dbReference type="InterPro" id="IPR035906">
    <property type="entry name" value="MetI-like_sf"/>
</dbReference>
<dbReference type="NCBIfam" id="TIGR01726">
    <property type="entry name" value="HEQRo_perm_3TM"/>
    <property type="match status" value="1"/>
</dbReference>
<dbReference type="PANTHER" id="PTHR30614:SF7">
    <property type="entry name" value="GLUTAMINE ABC TRANSPORTER PERMEASE PROTEIN GLNM-RELATED"/>
    <property type="match status" value="1"/>
</dbReference>
<dbReference type="PANTHER" id="PTHR30614">
    <property type="entry name" value="MEMBRANE COMPONENT OF AMINO ACID ABC TRANSPORTER"/>
    <property type="match status" value="1"/>
</dbReference>
<dbReference type="Pfam" id="PF00528">
    <property type="entry name" value="BPD_transp_1"/>
    <property type="match status" value="1"/>
</dbReference>
<dbReference type="SUPFAM" id="SSF161098">
    <property type="entry name" value="MetI-like"/>
    <property type="match status" value="1"/>
</dbReference>
<dbReference type="PROSITE" id="PS50928">
    <property type="entry name" value="ABC_TM1"/>
    <property type="match status" value="1"/>
</dbReference>
<gene>
    <name type="primary">glnM</name>
    <name type="ordered locus">BSU27450</name>
</gene>